<name>AROC_CAMJR</name>
<evidence type="ECO:0000255" key="1">
    <source>
        <dbReference type="HAMAP-Rule" id="MF_00300"/>
    </source>
</evidence>
<dbReference type="EC" id="4.2.3.5" evidence="1"/>
<dbReference type="EMBL" id="CP000025">
    <property type="protein sequence ID" value="AAW36228.1"/>
    <property type="molecule type" value="Genomic_DNA"/>
</dbReference>
<dbReference type="RefSeq" id="WP_002867551.1">
    <property type="nucleotide sequence ID" value="NC_003912.7"/>
</dbReference>
<dbReference type="SMR" id="Q5HSF9"/>
<dbReference type="KEGG" id="cjr:CJE1806"/>
<dbReference type="HOGENOM" id="CLU_034547_0_2_7"/>
<dbReference type="UniPathway" id="UPA00053">
    <property type="reaction ID" value="UER00090"/>
</dbReference>
<dbReference type="GO" id="GO:0005829">
    <property type="term" value="C:cytosol"/>
    <property type="evidence" value="ECO:0007669"/>
    <property type="project" value="TreeGrafter"/>
</dbReference>
<dbReference type="GO" id="GO:0004107">
    <property type="term" value="F:chorismate synthase activity"/>
    <property type="evidence" value="ECO:0007669"/>
    <property type="project" value="UniProtKB-UniRule"/>
</dbReference>
<dbReference type="GO" id="GO:0010181">
    <property type="term" value="F:FMN binding"/>
    <property type="evidence" value="ECO:0007669"/>
    <property type="project" value="TreeGrafter"/>
</dbReference>
<dbReference type="GO" id="GO:0008652">
    <property type="term" value="P:amino acid biosynthetic process"/>
    <property type="evidence" value="ECO:0007669"/>
    <property type="project" value="UniProtKB-KW"/>
</dbReference>
<dbReference type="GO" id="GO:0009073">
    <property type="term" value="P:aromatic amino acid family biosynthetic process"/>
    <property type="evidence" value="ECO:0007669"/>
    <property type="project" value="UniProtKB-KW"/>
</dbReference>
<dbReference type="GO" id="GO:0009423">
    <property type="term" value="P:chorismate biosynthetic process"/>
    <property type="evidence" value="ECO:0007669"/>
    <property type="project" value="UniProtKB-UniRule"/>
</dbReference>
<dbReference type="CDD" id="cd07304">
    <property type="entry name" value="Chorismate_synthase"/>
    <property type="match status" value="1"/>
</dbReference>
<dbReference type="Gene3D" id="3.60.150.10">
    <property type="entry name" value="Chorismate synthase AroC"/>
    <property type="match status" value="1"/>
</dbReference>
<dbReference type="HAMAP" id="MF_00300">
    <property type="entry name" value="Chorismate_synth"/>
    <property type="match status" value="1"/>
</dbReference>
<dbReference type="InterPro" id="IPR000453">
    <property type="entry name" value="Chorismate_synth"/>
</dbReference>
<dbReference type="InterPro" id="IPR035904">
    <property type="entry name" value="Chorismate_synth_AroC_sf"/>
</dbReference>
<dbReference type="InterPro" id="IPR020541">
    <property type="entry name" value="Chorismate_synthase_CS"/>
</dbReference>
<dbReference type="NCBIfam" id="TIGR00033">
    <property type="entry name" value="aroC"/>
    <property type="match status" value="1"/>
</dbReference>
<dbReference type="NCBIfam" id="NF003793">
    <property type="entry name" value="PRK05382.1"/>
    <property type="match status" value="1"/>
</dbReference>
<dbReference type="PANTHER" id="PTHR21085">
    <property type="entry name" value="CHORISMATE SYNTHASE"/>
    <property type="match status" value="1"/>
</dbReference>
<dbReference type="PANTHER" id="PTHR21085:SF0">
    <property type="entry name" value="CHORISMATE SYNTHASE"/>
    <property type="match status" value="1"/>
</dbReference>
<dbReference type="Pfam" id="PF01264">
    <property type="entry name" value="Chorismate_synt"/>
    <property type="match status" value="1"/>
</dbReference>
<dbReference type="PIRSF" id="PIRSF001456">
    <property type="entry name" value="Chorismate_synth"/>
    <property type="match status" value="1"/>
</dbReference>
<dbReference type="SUPFAM" id="SSF103263">
    <property type="entry name" value="Chorismate synthase, AroC"/>
    <property type="match status" value="1"/>
</dbReference>
<dbReference type="PROSITE" id="PS00787">
    <property type="entry name" value="CHORISMATE_SYNTHASE_1"/>
    <property type="match status" value="1"/>
</dbReference>
<dbReference type="PROSITE" id="PS00788">
    <property type="entry name" value="CHORISMATE_SYNTHASE_2"/>
    <property type="match status" value="1"/>
</dbReference>
<organism>
    <name type="scientific">Campylobacter jejuni (strain RM1221)</name>
    <dbReference type="NCBI Taxonomy" id="195099"/>
    <lineage>
        <taxon>Bacteria</taxon>
        <taxon>Pseudomonadati</taxon>
        <taxon>Campylobacterota</taxon>
        <taxon>Epsilonproteobacteria</taxon>
        <taxon>Campylobacterales</taxon>
        <taxon>Campylobacteraceae</taxon>
        <taxon>Campylobacter</taxon>
    </lineage>
</organism>
<proteinExistence type="inferred from homology"/>
<comment type="function">
    <text evidence="1">Catalyzes the anti-1,4-elimination of the C-3 phosphate and the C-6 proR hydrogen from 5-enolpyruvylshikimate-3-phosphate (EPSP) to yield chorismate, which is the branch point compound that serves as the starting substrate for the three terminal pathways of aromatic amino acid biosynthesis. This reaction introduces a second double bond into the aromatic ring system.</text>
</comment>
<comment type="catalytic activity">
    <reaction evidence="1">
        <text>5-O-(1-carboxyvinyl)-3-phosphoshikimate = chorismate + phosphate</text>
        <dbReference type="Rhea" id="RHEA:21020"/>
        <dbReference type="ChEBI" id="CHEBI:29748"/>
        <dbReference type="ChEBI" id="CHEBI:43474"/>
        <dbReference type="ChEBI" id="CHEBI:57701"/>
        <dbReference type="EC" id="4.2.3.5"/>
    </reaction>
</comment>
<comment type="cofactor">
    <cofactor evidence="1">
        <name>FMNH2</name>
        <dbReference type="ChEBI" id="CHEBI:57618"/>
    </cofactor>
    <text evidence="1">Reduced FMN (FMNH(2)).</text>
</comment>
<comment type="pathway">
    <text evidence="1">Metabolic intermediate biosynthesis; chorismate biosynthesis; chorismate from D-erythrose 4-phosphate and phosphoenolpyruvate: step 7/7.</text>
</comment>
<comment type="subunit">
    <text evidence="1">Homotetramer.</text>
</comment>
<comment type="similarity">
    <text evidence="1">Belongs to the chorismate synthase family.</text>
</comment>
<feature type="chain" id="PRO_0000140569" description="Chorismate synthase">
    <location>
        <begin position="1"/>
        <end position="362"/>
    </location>
</feature>
<feature type="binding site" evidence="1">
    <location>
        <position position="46"/>
    </location>
    <ligand>
        <name>NADP(+)</name>
        <dbReference type="ChEBI" id="CHEBI:58349"/>
    </ligand>
</feature>
<feature type="binding site" evidence="1">
    <location>
        <begin position="122"/>
        <end position="124"/>
    </location>
    <ligand>
        <name>FMN</name>
        <dbReference type="ChEBI" id="CHEBI:58210"/>
    </ligand>
</feature>
<feature type="binding site" evidence="1">
    <location>
        <begin position="238"/>
        <end position="239"/>
    </location>
    <ligand>
        <name>FMN</name>
        <dbReference type="ChEBI" id="CHEBI:58210"/>
    </ligand>
</feature>
<feature type="binding site" evidence="1">
    <location>
        <position position="278"/>
    </location>
    <ligand>
        <name>FMN</name>
        <dbReference type="ChEBI" id="CHEBI:58210"/>
    </ligand>
</feature>
<feature type="binding site" evidence="1">
    <location>
        <begin position="293"/>
        <end position="297"/>
    </location>
    <ligand>
        <name>FMN</name>
        <dbReference type="ChEBI" id="CHEBI:58210"/>
    </ligand>
</feature>
<feature type="binding site" evidence="1">
    <location>
        <position position="319"/>
    </location>
    <ligand>
        <name>FMN</name>
        <dbReference type="ChEBI" id="CHEBI:58210"/>
    </ligand>
</feature>
<gene>
    <name evidence="1" type="primary">aroC</name>
    <name type="ordered locus">CJE1806</name>
</gene>
<accession>Q5HSF9</accession>
<sequence>MNTFGTRLKFTSFGESHGVAVGCIIDGMPAGVKFDEEFLQNELDKRKGGSKFATPRKESDKAQVLSGVFEGYTTGHPIAIVVFNENAHSKDYDNLKDLFRPAHADFTYFYKYGIRDHRGGGRSSARESVARVAGGAVAAMLLREFDICVQSGVFGVGTFVSNLKEEEFDFEFAKKSEIFCLDPKLESDFKNEILNARNSKDSVGAAVFTKVSGMLVGLGEVLYDKLDSKLAHALMGVNAVKAVEIGEGINASKMRGSCNNDALKDGKFLSNHSGGILGGISNGENLILKTYFKPTPSIFAKQESIDKFGNNLEFELKGRHDPCVGVRGSVVASAMVRLVLADCLLLNTSANLNNLKNAYGLK</sequence>
<protein>
    <recommendedName>
        <fullName evidence="1">Chorismate synthase</fullName>
        <shortName evidence="1">CS</shortName>
        <ecNumber evidence="1">4.2.3.5</ecNumber>
    </recommendedName>
    <alternativeName>
        <fullName evidence="1">5-enolpyruvylshikimate-3-phosphate phospholyase</fullName>
    </alternativeName>
</protein>
<keyword id="KW-0028">Amino-acid biosynthesis</keyword>
<keyword id="KW-0057">Aromatic amino acid biosynthesis</keyword>
<keyword id="KW-0274">FAD</keyword>
<keyword id="KW-0285">Flavoprotein</keyword>
<keyword id="KW-0288">FMN</keyword>
<keyword id="KW-0456">Lyase</keyword>
<keyword id="KW-0521">NADP</keyword>
<reference key="1">
    <citation type="journal article" date="2005" name="PLoS Biol.">
        <title>Major structural differences and novel potential virulence mechanisms from the genomes of multiple Campylobacter species.</title>
        <authorList>
            <person name="Fouts D.E."/>
            <person name="Mongodin E.F."/>
            <person name="Mandrell R.E."/>
            <person name="Miller W.G."/>
            <person name="Rasko D.A."/>
            <person name="Ravel J."/>
            <person name="Brinkac L.M."/>
            <person name="DeBoy R.T."/>
            <person name="Parker C.T."/>
            <person name="Daugherty S.C."/>
            <person name="Dodson R.J."/>
            <person name="Durkin A.S."/>
            <person name="Madupu R."/>
            <person name="Sullivan S.A."/>
            <person name="Shetty J.U."/>
            <person name="Ayodeji M.A."/>
            <person name="Shvartsbeyn A."/>
            <person name="Schatz M.C."/>
            <person name="Badger J.H."/>
            <person name="Fraser C.M."/>
            <person name="Nelson K.E."/>
        </authorList>
    </citation>
    <scope>NUCLEOTIDE SEQUENCE [LARGE SCALE GENOMIC DNA]</scope>
    <source>
        <strain>RM1221</strain>
    </source>
</reference>